<feature type="signal peptide" evidence="1">
    <location>
        <begin position="1"/>
        <end position="24"/>
    </location>
</feature>
<feature type="chain" id="PRO_0000024733" description="Probable outer membrane protein PmpI">
    <location>
        <begin position="25"/>
        <end position="878"/>
    </location>
</feature>
<feature type="domain" description="Autotransporter" evidence="2">
    <location>
        <begin position="602"/>
        <end position="878"/>
    </location>
</feature>
<feature type="region of interest" description="Disordered" evidence="3">
    <location>
        <begin position="360"/>
        <end position="381"/>
    </location>
</feature>
<feature type="compositionally biased region" description="Low complexity" evidence="3">
    <location>
        <begin position="360"/>
        <end position="371"/>
    </location>
</feature>
<feature type="compositionally biased region" description="Polar residues" evidence="3">
    <location>
        <begin position="372"/>
        <end position="381"/>
    </location>
</feature>
<protein>
    <recommendedName>
        <fullName>Probable outer membrane protein PmpI</fullName>
    </recommendedName>
    <alternativeName>
        <fullName>Polymorphic membrane protein I</fullName>
    </alternativeName>
</protein>
<accession>O84882</accession>
<dbReference type="EMBL" id="AE001273">
    <property type="protein sequence ID" value="AAC68472.1"/>
    <property type="molecule type" value="Genomic_DNA"/>
</dbReference>
<dbReference type="PIR" id="B71460">
    <property type="entry name" value="B71460"/>
</dbReference>
<dbReference type="RefSeq" id="NP_220396.1">
    <property type="nucleotide sequence ID" value="NC_000117.1"/>
</dbReference>
<dbReference type="RefSeq" id="WP_010725381.1">
    <property type="nucleotide sequence ID" value="NC_000117.1"/>
</dbReference>
<dbReference type="STRING" id="272561.CT_874"/>
<dbReference type="EnsemblBacteria" id="AAC68472">
    <property type="protein sequence ID" value="AAC68472"/>
    <property type="gene ID" value="CT_874"/>
</dbReference>
<dbReference type="GeneID" id="884675"/>
<dbReference type="KEGG" id="ctr:CT_874"/>
<dbReference type="PATRIC" id="fig|272561.5.peg.966"/>
<dbReference type="HOGENOM" id="CLU_004549_1_1_0"/>
<dbReference type="InParanoid" id="O84882"/>
<dbReference type="OrthoDB" id="19077at2"/>
<dbReference type="Proteomes" id="UP000000431">
    <property type="component" value="Chromosome"/>
</dbReference>
<dbReference type="GO" id="GO:0009279">
    <property type="term" value="C:cell outer membrane"/>
    <property type="evidence" value="ECO:0007669"/>
    <property type="project" value="UniProtKB-SubCell"/>
</dbReference>
<dbReference type="GO" id="GO:0005576">
    <property type="term" value="C:extracellular region"/>
    <property type="evidence" value="ECO:0007669"/>
    <property type="project" value="UniProtKB-KW"/>
</dbReference>
<dbReference type="InterPro" id="IPR005546">
    <property type="entry name" value="Autotransporte_beta"/>
</dbReference>
<dbReference type="InterPro" id="IPR036709">
    <property type="entry name" value="Autotransporte_beta_dom_sf"/>
</dbReference>
<dbReference type="InterPro" id="IPR011427">
    <property type="entry name" value="Polymorphic_membr_middle"/>
</dbReference>
<dbReference type="InterPro" id="IPR003368">
    <property type="entry name" value="POMP_repeat"/>
</dbReference>
<dbReference type="NCBIfam" id="TIGR01376">
    <property type="entry name" value="POMP_repeat"/>
    <property type="match status" value="6"/>
</dbReference>
<dbReference type="Pfam" id="PF02415">
    <property type="entry name" value="Chlam_PMP"/>
    <property type="match status" value="6"/>
</dbReference>
<dbReference type="Pfam" id="PF07548">
    <property type="entry name" value="ChlamPMP_M"/>
    <property type="match status" value="1"/>
</dbReference>
<dbReference type="SMART" id="SM00869">
    <property type="entry name" value="Autotransporter"/>
    <property type="match status" value="1"/>
</dbReference>
<dbReference type="SUPFAM" id="SSF103515">
    <property type="entry name" value="Autotransporter"/>
    <property type="match status" value="1"/>
</dbReference>
<dbReference type="PROSITE" id="PS51208">
    <property type="entry name" value="AUTOTRANSPORTER"/>
    <property type="match status" value="1"/>
</dbReference>
<keyword id="KW-0998">Cell outer membrane</keyword>
<keyword id="KW-0134">Cell wall</keyword>
<keyword id="KW-0472">Membrane</keyword>
<keyword id="KW-1185">Reference proteome</keyword>
<keyword id="KW-0964">Secreted</keyword>
<keyword id="KW-0732">Signal</keyword>
<keyword id="KW-0812">Transmembrane</keyword>
<keyword id="KW-1134">Transmembrane beta strand</keyword>
<gene>
    <name type="primary">pmpI</name>
    <name type="ordered locus">CT_874</name>
</gene>
<name>PMPI_CHLTR</name>
<comment type="subcellular location">
    <subcellularLocation>
        <location>Secreted</location>
        <location>Cell wall</location>
    </subcellularLocation>
    <subcellularLocation>
        <location evidence="4">Cell outer membrane</location>
        <topology evidence="4">Peripheral membrane protein</topology>
        <orientation evidence="4">Extracellular side</orientation>
    </subcellularLocation>
</comment>
<comment type="developmental stage">
    <text>Elementary body.</text>
</comment>
<comment type="similarity">
    <text evidence="4">Belongs to the PMP outer membrane protein family.</text>
</comment>
<reference key="1">
    <citation type="journal article" date="1998" name="Science">
        <title>Genome sequence of an obligate intracellular pathogen of humans: Chlamydia trachomatis.</title>
        <authorList>
            <person name="Stephens R.S."/>
            <person name="Kalman S."/>
            <person name="Lammel C.J."/>
            <person name="Fan J."/>
            <person name="Marathe R."/>
            <person name="Aravind L."/>
            <person name="Mitchell W.P."/>
            <person name="Olinger L."/>
            <person name="Tatusov R.L."/>
            <person name="Zhao Q."/>
            <person name="Koonin E.V."/>
            <person name="Davis R.W."/>
        </authorList>
    </citation>
    <scope>NUCLEOTIDE SEQUENCE [LARGE SCALE GENOMIC DNA]</scope>
    <source>
        <strain>ATCC VR-885 / DSM 19411 / UW-3/Cx</strain>
    </source>
</reference>
<proteinExistence type="evidence at transcript level"/>
<evidence type="ECO:0000255" key="1"/>
<evidence type="ECO:0000255" key="2">
    <source>
        <dbReference type="PROSITE-ProRule" id="PRU00556"/>
    </source>
</evidence>
<evidence type="ECO:0000256" key="3">
    <source>
        <dbReference type="SAM" id="MobiDB-lite"/>
    </source>
</evidence>
<evidence type="ECO:0000305" key="4"/>
<sequence length="878" mass="95593">MRPDHMNFCCLCAAILSSTAVLFGQDPLGETALLTKNPNHVVCTFFEDCTMESLFPALCAHASQDDPLYVLGNSYCWFVSKLHITDPKEALFKEKGDLSIQNFRFLSFTDCSSKESSPSIIHQKNGQLSLRNNGSMSFCRNHAEGSGGAISADAFSLQHNYLFTAFEENSSKGNGGAIQAQTFSLSRNVSPISFARNRADLNGGAICCSNLICSGNVNPLFFTGNSATNGGAICCISDLNTSEKGSLSLACNQETLFASNSAKEKGGAIYAKHMVLRYNGPVSFINNSAKIGGAIAIQSGGSLSILAGEGSVLFQNNSQRTSDQGLVRNAIYLEKDAILSSLEARNGDILFFDPIVQESSSKESPLPSSLQASVTSPTPATASPLVIQTSANRSVIFSSERLSEEEKTPDNLTSQLQQPIELKSGRLVLKDRAVLSAPSLSQDPQALLIMEAGTSLKTSSDLKLATLSIPLHSLDTEKSVTIHAPNLSIQKIFLSNSGDENFYENVELLSKEQNNIPLLTLSKEQSHLHLPDGNLSSHFGYQGDWTFSWKDSDEGHSLIANWTPKNYVPHPERQSTLVANTLWNTYSDMQAVQSMINTIAHGGAYLFGTWGSAVSNLFYAHDSSGKPIDNWHHRSLGYLFGISTHSLDDHSFCLAAGQLLGKSSDSFITSTETTSYIATVQAQLATPLMKISAQACYNESIHELKTKYRSFSKEGFGSWHSVAVSGEVCASIPIVSNGSGLFSSFSIFSKLQGFSGTQDGFEESSGEIRSFSASSFRNISLPMGITFEKKSQKTRNYYYFLGAYIQDLKRDVESGPVVLLKNAVSWDAPMANLDSRAYMFRLTNQRALHRLQTLLNVSYVLRGQSHSYSLDLGTTYRF</sequence>
<organism>
    <name type="scientific">Chlamydia trachomatis serovar D (strain ATCC VR-885 / DSM 19411 / UW-3/Cx)</name>
    <dbReference type="NCBI Taxonomy" id="272561"/>
    <lineage>
        <taxon>Bacteria</taxon>
        <taxon>Pseudomonadati</taxon>
        <taxon>Chlamydiota</taxon>
        <taxon>Chlamydiia</taxon>
        <taxon>Chlamydiales</taxon>
        <taxon>Chlamydiaceae</taxon>
        <taxon>Chlamydia/Chlamydophila group</taxon>
        <taxon>Chlamydia</taxon>
    </lineage>
</organism>